<organism>
    <name type="scientific">Staphylococcus epidermidis (strain ATCC 12228 / FDA PCI 1200)</name>
    <dbReference type="NCBI Taxonomy" id="176280"/>
    <lineage>
        <taxon>Bacteria</taxon>
        <taxon>Bacillati</taxon>
        <taxon>Bacillota</taxon>
        <taxon>Bacilli</taxon>
        <taxon>Bacillales</taxon>
        <taxon>Staphylococcaceae</taxon>
        <taxon>Staphylococcus</taxon>
    </lineage>
</organism>
<protein>
    <recommendedName>
        <fullName evidence="1">Endonuclease MutS2</fullName>
        <ecNumber evidence="1">3.1.-.-</ecNumber>
    </recommendedName>
    <alternativeName>
        <fullName evidence="1">Ribosome-associated protein quality control-upstream factor</fullName>
        <shortName evidence="1">RQC-upstream factor</shortName>
        <shortName evidence="1">RqcU</shortName>
        <ecNumber evidence="1">3.6.4.-</ecNumber>
    </alternativeName>
</protein>
<comment type="function">
    <text evidence="1">Endonuclease that is involved in the suppression of homologous recombination and thus may have a key role in the control of bacterial genetic diversity.</text>
</comment>
<comment type="function">
    <text evidence="1">Acts as a ribosome collision sensor, splitting the ribosome into its 2 subunits. Detects stalled/collided 70S ribosomes which it binds and splits by an ATP-hydrolysis driven conformational change. Acts upstream of the ribosome quality control system (RQC), a ribosome-associated complex that mediates the extraction of incompletely synthesized nascent chains from stalled ribosomes and their subsequent degradation. Probably generates substrates for RQC.</text>
</comment>
<comment type="subunit">
    <text evidence="1">Homodimer. Binds to stalled ribosomes, contacting rRNA.</text>
</comment>
<comment type="similarity">
    <text evidence="1">Belongs to the DNA mismatch repair MutS family. MutS2 subfamily.</text>
</comment>
<feature type="chain" id="PRO_0000115234" description="Endonuclease MutS2">
    <location>
        <begin position="1"/>
        <end position="782"/>
    </location>
</feature>
<feature type="domain" description="Smr" evidence="1">
    <location>
        <begin position="707"/>
        <end position="782"/>
    </location>
</feature>
<feature type="binding site" evidence="1">
    <location>
        <begin position="336"/>
        <end position="343"/>
    </location>
    <ligand>
        <name>ATP</name>
        <dbReference type="ChEBI" id="CHEBI:30616"/>
    </ligand>
</feature>
<dbReference type="EC" id="3.1.-.-" evidence="1"/>
<dbReference type="EC" id="3.6.4.-" evidence="1"/>
<dbReference type="EMBL" id="AE015929">
    <property type="protein sequence ID" value="AAO04434.1"/>
    <property type="molecule type" value="Genomic_DNA"/>
</dbReference>
<dbReference type="RefSeq" id="NP_764392.1">
    <property type="nucleotide sequence ID" value="NC_004461.1"/>
</dbReference>
<dbReference type="RefSeq" id="WP_001833037.1">
    <property type="nucleotide sequence ID" value="NZ_WBME01000035.1"/>
</dbReference>
<dbReference type="SMR" id="Q8CPL6"/>
<dbReference type="KEGG" id="sep:SE_0837"/>
<dbReference type="PATRIC" id="fig|176280.10.peg.810"/>
<dbReference type="eggNOG" id="COG1193">
    <property type="taxonomic scope" value="Bacteria"/>
</dbReference>
<dbReference type="HOGENOM" id="CLU_011252_2_1_9"/>
<dbReference type="OrthoDB" id="9808166at2"/>
<dbReference type="Proteomes" id="UP000001411">
    <property type="component" value="Chromosome"/>
</dbReference>
<dbReference type="GO" id="GO:0005524">
    <property type="term" value="F:ATP binding"/>
    <property type="evidence" value="ECO:0007669"/>
    <property type="project" value="UniProtKB-UniRule"/>
</dbReference>
<dbReference type="GO" id="GO:0016887">
    <property type="term" value="F:ATP hydrolysis activity"/>
    <property type="evidence" value="ECO:0007669"/>
    <property type="project" value="InterPro"/>
</dbReference>
<dbReference type="GO" id="GO:0140664">
    <property type="term" value="F:ATP-dependent DNA damage sensor activity"/>
    <property type="evidence" value="ECO:0007669"/>
    <property type="project" value="InterPro"/>
</dbReference>
<dbReference type="GO" id="GO:0004519">
    <property type="term" value="F:endonuclease activity"/>
    <property type="evidence" value="ECO:0007669"/>
    <property type="project" value="UniProtKB-UniRule"/>
</dbReference>
<dbReference type="GO" id="GO:0030983">
    <property type="term" value="F:mismatched DNA binding"/>
    <property type="evidence" value="ECO:0007669"/>
    <property type="project" value="InterPro"/>
</dbReference>
<dbReference type="GO" id="GO:0043023">
    <property type="term" value="F:ribosomal large subunit binding"/>
    <property type="evidence" value="ECO:0007669"/>
    <property type="project" value="UniProtKB-UniRule"/>
</dbReference>
<dbReference type="GO" id="GO:0019843">
    <property type="term" value="F:rRNA binding"/>
    <property type="evidence" value="ECO:0007669"/>
    <property type="project" value="UniProtKB-UniRule"/>
</dbReference>
<dbReference type="GO" id="GO:0006298">
    <property type="term" value="P:mismatch repair"/>
    <property type="evidence" value="ECO:0007669"/>
    <property type="project" value="InterPro"/>
</dbReference>
<dbReference type="GO" id="GO:0045910">
    <property type="term" value="P:negative regulation of DNA recombination"/>
    <property type="evidence" value="ECO:0007669"/>
    <property type="project" value="InterPro"/>
</dbReference>
<dbReference type="GO" id="GO:0072344">
    <property type="term" value="P:rescue of stalled ribosome"/>
    <property type="evidence" value="ECO:0007669"/>
    <property type="project" value="UniProtKB-UniRule"/>
</dbReference>
<dbReference type="CDD" id="cd03280">
    <property type="entry name" value="ABC_MutS2"/>
    <property type="match status" value="1"/>
</dbReference>
<dbReference type="FunFam" id="3.30.1370.110:FF:000004">
    <property type="entry name" value="Endonuclease MutS2"/>
    <property type="match status" value="1"/>
</dbReference>
<dbReference type="FunFam" id="3.40.50.300:FF:000830">
    <property type="entry name" value="Endonuclease MutS2"/>
    <property type="match status" value="1"/>
</dbReference>
<dbReference type="Gene3D" id="3.30.1370.110">
    <property type="match status" value="1"/>
</dbReference>
<dbReference type="Gene3D" id="3.40.50.300">
    <property type="entry name" value="P-loop containing nucleotide triphosphate hydrolases"/>
    <property type="match status" value="1"/>
</dbReference>
<dbReference type="HAMAP" id="MF_00092">
    <property type="entry name" value="MutS2"/>
    <property type="match status" value="1"/>
</dbReference>
<dbReference type="InterPro" id="IPR000432">
    <property type="entry name" value="DNA_mismatch_repair_MutS_C"/>
</dbReference>
<dbReference type="InterPro" id="IPR007696">
    <property type="entry name" value="DNA_mismatch_repair_MutS_core"/>
</dbReference>
<dbReference type="InterPro" id="IPR036187">
    <property type="entry name" value="DNA_mismatch_repair_MutS_sf"/>
</dbReference>
<dbReference type="InterPro" id="IPR046893">
    <property type="entry name" value="MSSS"/>
</dbReference>
<dbReference type="InterPro" id="IPR045076">
    <property type="entry name" value="MutS"/>
</dbReference>
<dbReference type="InterPro" id="IPR005747">
    <property type="entry name" value="MutS2"/>
</dbReference>
<dbReference type="InterPro" id="IPR027417">
    <property type="entry name" value="P-loop_NTPase"/>
</dbReference>
<dbReference type="InterPro" id="IPR002625">
    <property type="entry name" value="Smr_dom"/>
</dbReference>
<dbReference type="InterPro" id="IPR036063">
    <property type="entry name" value="Smr_dom_sf"/>
</dbReference>
<dbReference type="NCBIfam" id="TIGR01069">
    <property type="entry name" value="mutS2"/>
    <property type="match status" value="1"/>
</dbReference>
<dbReference type="PANTHER" id="PTHR48466:SF2">
    <property type="entry name" value="OS10G0509000 PROTEIN"/>
    <property type="match status" value="1"/>
</dbReference>
<dbReference type="PANTHER" id="PTHR48466">
    <property type="entry name" value="OS10G0509000 PROTEIN-RELATED"/>
    <property type="match status" value="1"/>
</dbReference>
<dbReference type="Pfam" id="PF20297">
    <property type="entry name" value="MSSS"/>
    <property type="match status" value="1"/>
</dbReference>
<dbReference type="Pfam" id="PF00488">
    <property type="entry name" value="MutS_V"/>
    <property type="match status" value="1"/>
</dbReference>
<dbReference type="Pfam" id="PF01713">
    <property type="entry name" value="Smr"/>
    <property type="match status" value="1"/>
</dbReference>
<dbReference type="PIRSF" id="PIRSF005814">
    <property type="entry name" value="MutS_YshD"/>
    <property type="match status" value="1"/>
</dbReference>
<dbReference type="SMART" id="SM00534">
    <property type="entry name" value="MUTSac"/>
    <property type="match status" value="1"/>
</dbReference>
<dbReference type="SMART" id="SM00533">
    <property type="entry name" value="MUTSd"/>
    <property type="match status" value="1"/>
</dbReference>
<dbReference type="SMART" id="SM00463">
    <property type="entry name" value="SMR"/>
    <property type="match status" value="1"/>
</dbReference>
<dbReference type="SUPFAM" id="SSF48334">
    <property type="entry name" value="DNA repair protein MutS, domain III"/>
    <property type="match status" value="1"/>
</dbReference>
<dbReference type="SUPFAM" id="SSF52540">
    <property type="entry name" value="P-loop containing nucleoside triphosphate hydrolases"/>
    <property type="match status" value="1"/>
</dbReference>
<dbReference type="SUPFAM" id="SSF160443">
    <property type="entry name" value="SMR domain-like"/>
    <property type="match status" value="1"/>
</dbReference>
<dbReference type="PROSITE" id="PS00486">
    <property type="entry name" value="DNA_MISMATCH_REPAIR_2"/>
    <property type="match status" value="1"/>
</dbReference>
<dbReference type="PROSITE" id="PS50828">
    <property type="entry name" value="SMR"/>
    <property type="match status" value="1"/>
</dbReference>
<name>MUTS2_STAES</name>
<evidence type="ECO:0000255" key="1">
    <source>
        <dbReference type="HAMAP-Rule" id="MF_00092"/>
    </source>
</evidence>
<reference key="1">
    <citation type="journal article" date="2003" name="Mol. Microbiol.">
        <title>Genome-based analysis of virulence genes in a non-biofilm-forming Staphylococcus epidermidis strain (ATCC 12228).</title>
        <authorList>
            <person name="Zhang Y.-Q."/>
            <person name="Ren S.-X."/>
            <person name="Li H.-L."/>
            <person name="Wang Y.-X."/>
            <person name="Fu G."/>
            <person name="Yang J."/>
            <person name="Qin Z.-Q."/>
            <person name="Miao Y.-G."/>
            <person name="Wang W.-Y."/>
            <person name="Chen R.-S."/>
            <person name="Shen Y."/>
            <person name="Chen Z."/>
            <person name="Yuan Z.-H."/>
            <person name="Zhao G.-P."/>
            <person name="Qu D."/>
            <person name="Danchin A."/>
            <person name="Wen Y.-M."/>
        </authorList>
    </citation>
    <scope>NUCLEOTIDE SEQUENCE [LARGE SCALE GENOMIC DNA]</scope>
    <source>
        <strain>ATCC 12228 / FDA PCI 1200</strain>
    </source>
</reference>
<gene>
    <name evidence="1" type="primary">mutS2</name>
    <name evidence="1" type="synonym">rqcU</name>
    <name type="ordered locus">SE_0837</name>
</gene>
<keyword id="KW-0067">ATP-binding</keyword>
<keyword id="KW-0238">DNA-binding</keyword>
<keyword id="KW-0255">Endonuclease</keyword>
<keyword id="KW-0378">Hydrolase</keyword>
<keyword id="KW-0540">Nuclease</keyword>
<keyword id="KW-0547">Nucleotide-binding</keyword>
<keyword id="KW-0694">RNA-binding</keyword>
<keyword id="KW-0699">rRNA-binding</keyword>
<accession>Q8CPL6</accession>
<proteinExistence type="inferred from homology"/>
<sequence length="782" mass="88719">MRQKTLDVLEFEKIKSFVADETISDLGREKVQEMAPASNFDTVEFQMNETDEISQIYNKHRLPSLSGLAKVSPLVHRASIGGVLNVGELNRIKRLVQVQNQFKTFYNQMLEEDEEVKYPILHDKMNHLPILTDLFKEINEKCDAHDLFDHASYTLQSIRSKISRTNQRIRQNLDRIVKNQGNQKKLSDAIVTVRNDRNVIPVKAEYRQDFNGIVHDQSASGQTLYIEPNSVVEMNNQISRLRNDEAVERERILTELTGLVSAESDALLVAESVMGQIDFLIAKARYARTIKGTKPTFKEERTIYLPNAFHPLLDKDTVVANTIEFIDDVETVIITGPNTGGKTVTLKTLGLIIVMAQSGLLIPTLDGSQLSIFENVYCDIGDEQSIEQSLSTFSSHMKNIVEILQDADQNSLILFDELGAGTDPSEGAALAMSILDYVRRLGSLVMATTHYPELKAYSYNREGVMNASVEFDVDTLSPTYKLLMGVPGRSNAFDISKKLGLSLNIINKAKTMIGTDEQEINAMIESLEHNSKRVDQQRIELDRLVREAQETHDALSKQYQQYQNYEKSLMEEAKEKANQRVKSATKEADEILKELRNLRDHKGAEVKEHELIDKKKQLDDQYEAKSIKQHVQKKKYDTIHAGDEVKVLSYGQKGEVLELVGNEEAVVQMGIIKMKLPIEDLEKTKKKKEKPTKMVTRQNRQTIKTELDLRGYRYEEALNELDQYLDQAVLSNYEQVYIIHGKGTGALQKGVQQHLKKHKSVRQFRGGMPNEGGFGVTVAELK</sequence>